<evidence type="ECO:0000250" key="1">
    <source>
        <dbReference type="UniProtKB" id="A1C8C3"/>
    </source>
</evidence>
<evidence type="ECO:0000250" key="2">
    <source>
        <dbReference type="UniProtKB" id="P04798"/>
    </source>
</evidence>
<evidence type="ECO:0000255" key="3"/>
<evidence type="ECO:0000269" key="4">
    <source>
    </source>
</evidence>
<evidence type="ECO:0000303" key="5">
    <source>
    </source>
</evidence>
<evidence type="ECO:0000305" key="6"/>
<evidence type="ECO:0000305" key="7">
    <source>
    </source>
</evidence>
<feature type="chain" id="PRO_0000451170" description="Cytochrome P450 monooxygenase oblB">
    <location>
        <begin position="1"/>
        <end position="524"/>
    </location>
</feature>
<feature type="transmembrane region" description="Helical" evidence="3">
    <location>
        <begin position="18"/>
        <end position="38"/>
    </location>
</feature>
<feature type="transmembrane region" description="Helical" evidence="3">
    <location>
        <begin position="225"/>
        <end position="245"/>
    </location>
</feature>
<feature type="transmembrane region" description="Helical" evidence="3">
    <location>
        <begin position="322"/>
        <end position="342"/>
    </location>
</feature>
<feature type="binding site" description="axial binding residue" evidence="2">
    <location>
        <position position="466"/>
    </location>
    <ligand>
        <name>heme</name>
        <dbReference type="ChEBI" id="CHEBI:30413"/>
    </ligand>
    <ligandPart>
        <name>Fe</name>
        <dbReference type="ChEBI" id="CHEBI:18248"/>
    </ligandPart>
</feature>
<reference key="1">
    <citation type="journal article" date="2012" name="PLoS Pathog.">
        <title>Diverse lifestyles and strategies of plant pathogenesis encoded in the genomes of eighteen Dothideomycetes fungi.</title>
        <authorList>
            <person name="Ohm R.A."/>
            <person name="Feau N."/>
            <person name="Henrissat B."/>
            <person name="Schoch C.L."/>
            <person name="Horwitz B.A."/>
            <person name="Barry K.W."/>
            <person name="Condon B.J."/>
            <person name="Copeland A.C."/>
            <person name="Dhillon B."/>
            <person name="Glaser F."/>
            <person name="Hesse C.N."/>
            <person name="Kosti I."/>
            <person name="LaButti K."/>
            <person name="Lindquist E.A."/>
            <person name="Lucas S."/>
            <person name="Salamov A.A."/>
            <person name="Bradshaw R.E."/>
            <person name="Ciuffetti L."/>
            <person name="Hamelin R.C."/>
            <person name="Kema G.H.J."/>
            <person name="Lawrence C."/>
            <person name="Scott J.A."/>
            <person name="Spatafora J.W."/>
            <person name="Turgeon B.G."/>
            <person name="de Wit P.J.G.M."/>
            <person name="Zhong S."/>
            <person name="Goodwin S.B."/>
            <person name="Grigoriev I.V."/>
        </authorList>
    </citation>
    <scope>NUCLEOTIDE SEQUENCE [LARGE SCALE GENOMIC DNA]</scope>
    <source>
        <strain>C5 / ATCC 48332 / race O</strain>
    </source>
</reference>
<reference key="2">
    <citation type="journal article" date="2013" name="PLoS Genet.">
        <title>Comparative genome structure, secondary metabolite, and effector coding capacity across Cochliobolus pathogens.</title>
        <authorList>
            <person name="Condon B.J."/>
            <person name="Leng Y."/>
            <person name="Wu D."/>
            <person name="Bushley K.E."/>
            <person name="Ohm R.A."/>
            <person name="Otillar R."/>
            <person name="Martin J."/>
            <person name="Schackwitz W."/>
            <person name="Grimwood J."/>
            <person name="MohdZainudin N."/>
            <person name="Xue C."/>
            <person name="Wang R."/>
            <person name="Manning V.A."/>
            <person name="Dhillon B."/>
            <person name="Tu Z.J."/>
            <person name="Steffenson B.J."/>
            <person name="Salamov A."/>
            <person name="Sun H."/>
            <person name="Lowry S."/>
            <person name="LaButti K."/>
            <person name="Han J."/>
            <person name="Copeland A."/>
            <person name="Lindquist E."/>
            <person name="Barry K."/>
            <person name="Schmutz J."/>
            <person name="Baker S.E."/>
            <person name="Ciuffetti L.M."/>
            <person name="Grigoriev I.V."/>
            <person name="Zhong S."/>
            <person name="Turgeon B.G."/>
        </authorList>
    </citation>
    <scope>NUCLEOTIDE SEQUENCE [LARGE SCALE GENOMIC DNA]</scope>
    <source>
        <strain>C5 / ATCC 48332 / race O</strain>
    </source>
</reference>
<reference key="3">
    <citation type="journal article" date="2016" name="Org. Lett.">
        <title>Multiple oxidative modifications in the ophiobolin biosynthesis: P450 oxidations found in genome mining.</title>
        <authorList>
            <person name="Narita K."/>
            <person name="Chiba R."/>
            <person name="Minami A."/>
            <person name="Kodama M."/>
            <person name="Fujii I."/>
            <person name="Gomi K."/>
            <person name="Oikawa H."/>
        </authorList>
    </citation>
    <scope>FUNCTION</scope>
    <scope>CATALYTIC ACTIVITY</scope>
    <scope>PATHWAY</scope>
</reference>
<keyword id="KW-0349">Heme</keyword>
<keyword id="KW-0408">Iron</keyword>
<keyword id="KW-0472">Membrane</keyword>
<keyword id="KW-0479">Metal-binding</keyword>
<keyword id="KW-0503">Monooxygenase</keyword>
<keyword id="KW-0560">Oxidoreductase</keyword>
<keyword id="KW-1185">Reference proteome</keyword>
<keyword id="KW-0812">Transmembrane</keyword>
<keyword id="KW-1133">Transmembrane helix</keyword>
<name>OBLB_COCH5</name>
<protein>
    <recommendedName>
        <fullName evidence="5">Cytochrome P450 monooxygenase oblB</fullName>
        <ecNumber evidence="4">1.-.-.-</ecNumber>
    </recommendedName>
    <alternativeName>
        <fullName evidence="5">Ophiobolin biosynthesis cluster protein B</fullName>
    </alternativeName>
</protein>
<sequence>MSSIQLQKYLDLLPENAILNAGIAIAGLSAAYAIGLVIYRLYLSPISKFPGPKIAAATFWYELYYDVIHKGQYFHKIEEMHEKYGPIVRINPHELSIRDPDYYDELYVSGSVRPSDRYEGFVNGVVDFEGSHLATVAHELHRKRRKPLDPYFSRAGVNRLEPMVADLTEELVVKRFEEFKGTGKVVRLDHAFTAYSGDIISALCIDEPPHFTSTPDFTPSWFDLFHSGVVTLPLFMGLPWLIHLIRLIPESILAVIDPGAQNWNTFRMMCYDSIKDTKREKGAQPTKDTSLLGRPTLFRHLVNSDLPASELSDERLLREAQVLIGSGTMTTAGTMCFLVYYIKSNPEIHRRLTEELKPIMEGYPHKKPSWAEIEKAEYLQAVLKEGLRLSFGTIHRRPRVSPNQPLQFKEWVIPAGVPVGMSAYFQHTDPKIFPNPHEFNPDRWLSNVTPAMKKNYVPFSKGSRHCLGMNLAYCELNYIIATMFRPGAVDFDLFETTELDVKPTHDMVVPLPSLKSKGFKVKFN</sequence>
<comment type="function">
    <text evidence="1 4 7">Cytochrome P450 monooxygenase; part of the gene cluster that mediates the biosynthesis of the sesterterpenes ophiobolins, fungal phytotoxins with potential anti-cancer activities (PubMed:27116000). The first step of the pathway is performed by the sesterterpene synthase oblA that possesses both prenyl transferase and terpene cyclase activity, converting isopentenyl diphosphate and dimethylallyl diphosphate into geranylfarnesyl diphosphate (GFPP) and further converting GFPP into ophiobolin F, respectively (By similarity). Other sesterterpenoids (C(25) terpenoids) are found as minor products of oblA (By similarity). The cytochrome P450 monooxygenase oblB then catalyzes a four-step oxidative transformation of ophiobolin F to yield ophiobolin C (PubMed:27116000). The FAD-dependent oxidoreductase oblC might be involved in a later oxidation step that produces ophiobolin A (Probable).</text>
</comment>
<comment type="catalytic activity">
    <reaction evidence="4">
        <text>ophiobolin F + 4 reduced [NADPH--hemoprotein reductase] + 4 O2 = ophiobolin C + 4 oxidized [NADPH--hemoprotein reductase] + 6 H2O + 4 H(+)</text>
        <dbReference type="Rhea" id="RHEA:66896"/>
        <dbReference type="Rhea" id="RHEA-COMP:11964"/>
        <dbReference type="Rhea" id="RHEA-COMP:11965"/>
        <dbReference type="ChEBI" id="CHEBI:15377"/>
        <dbReference type="ChEBI" id="CHEBI:15378"/>
        <dbReference type="ChEBI" id="CHEBI:15379"/>
        <dbReference type="ChEBI" id="CHEBI:57618"/>
        <dbReference type="ChEBI" id="CHEBI:58210"/>
        <dbReference type="ChEBI" id="CHEBI:78293"/>
        <dbReference type="ChEBI" id="CHEBI:167548"/>
    </reaction>
    <physiologicalReaction direction="left-to-right" evidence="4">
        <dbReference type="Rhea" id="RHEA:66897"/>
    </physiologicalReaction>
</comment>
<comment type="cofactor">
    <cofactor evidence="2">
        <name>heme</name>
        <dbReference type="ChEBI" id="CHEBI:30413"/>
    </cofactor>
</comment>
<comment type="pathway">
    <text evidence="7">Secondary metabolite biosynthesis; terpenoid biosynthesis.</text>
</comment>
<comment type="subcellular location">
    <subcellularLocation>
        <location evidence="3">Membrane</location>
        <topology evidence="3">Multi-pass membrane protein</topology>
    </subcellularLocation>
</comment>
<comment type="similarity">
    <text evidence="6">Belongs to the cytochrome P450 family.</text>
</comment>
<dbReference type="EC" id="1.-.-.-" evidence="4"/>
<dbReference type="EMBL" id="KB445570">
    <property type="protein sequence ID" value="EMD96233.1"/>
    <property type="molecule type" value="Genomic_DNA"/>
</dbReference>
<dbReference type="SMR" id="M2V933"/>
<dbReference type="STRING" id="701091.M2V933"/>
<dbReference type="eggNOG" id="KOG0158">
    <property type="taxonomic scope" value="Eukaryota"/>
</dbReference>
<dbReference type="HOGENOM" id="CLU_001570_14_4_1"/>
<dbReference type="OMA" id="SDVKQAH"/>
<dbReference type="OrthoDB" id="20391at28556"/>
<dbReference type="UniPathway" id="UPA00213"/>
<dbReference type="Proteomes" id="UP000016936">
    <property type="component" value="Unassembled WGS sequence"/>
</dbReference>
<dbReference type="GO" id="GO:0016020">
    <property type="term" value="C:membrane"/>
    <property type="evidence" value="ECO:0007669"/>
    <property type="project" value="UniProtKB-SubCell"/>
</dbReference>
<dbReference type="GO" id="GO:0020037">
    <property type="term" value="F:heme binding"/>
    <property type="evidence" value="ECO:0007669"/>
    <property type="project" value="InterPro"/>
</dbReference>
<dbReference type="GO" id="GO:0005506">
    <property type="term" value="F:iron ion binding"/>
    <property type="evidence" value="ECO:0007669"/>
    <property type="project" value="InterPro"/>
</dbReference>
<dbReference type="GO" id="GO:0004497">
    <property type="term" value="F:monooxygenase activity"/>
    <property type="evidence" value="ECO:0007669"/>
    <property type="project" value="UniProtKB-KW"/>
</dbReference>
<dbReference type="GO" id="GO:0016705">
    <property type="term" value="F:oxidoreductase activity, acting on paired donors, with incorporation or reduction of molecular oxygen"/>
    <property type="evidence" value="ECO:0007669"/>
    <property type="project" value="InterPro"/>
</dbReference>
<dbReference type="GO" id="GO:0016114">
    <property type="term" value="P:terpenoid biosynthetic process"/>
    <property type="evidence" value="ECO:0007669"/>
    <property type="project" value="UniProtKB-UniPathway"/>
</dbReference>
<dbReference type="CDD" id="cd11062">
    <property type="entry name" value="CYP58-like"/>
    <property type="match status" value="1"/>
</dbReference>
<dbReference type="Gene3D" id="1.10.630.10">
    <property type="entry name" value="Cytochrome P450"/>
    <property type="match status" value="1"/>
</dbReference>
<dbReference type="InterPro" id="IPR001128">
    <property type="entry name" value="Cyt_P450"/>
</dbReference>
<dbReference type="InterPro" id="IPR017972">
    <property type="entry name" value="Cyt_P450_CS"/>
</dbReference>
<dbReference type="InterPro" id="IPR002403">
    <property type="entry name" value="Cyt_P450_E_grp-IV"/>
</dbReference>
<dbReference type="InterPro" id="IPR036396">
    <property type="entry name" value="Cyt_P450_sf"/>
</dbReference>
<dbReference type="InterPro" id="IPR050121">
    <property type="entry name" value="Cytochrome_P450_monoxygenase"/>
</dbReference>
<dbReference type="PANTHER" id="PTHR24305">
    <property type="entry name" value="CYTOCHROME P450"/>
    <property type="match status" value="1"/>
</dbReference>
<dbReference type="PANTHER" id="PTHR24305:SF157">
    <property type="entry name" value="N-ACETYLTRYPTOPHAN 6-HYDROXYLASE IVOC-RELATED"/>
    <property type="match status" value="1"/>
</dbReference>
<dbReference type="Pfam" id="PF00067">
    <property type="entry name" value="p450"/>
    <property type="match status" value="1"/>
</dbReference>
<dbReference type="PRINTS" id="PR00465">
    <property type="entry name" value="EP450IV"/>
</dbReference>
<dbReference type="PRINTS" id="PR00385">
    <property type="entry name" value="P450"/>
</dbReference>
<dbReference type="SUPFAM" id="SSF48264">
    <property type="entry name" value="Cytochrome P450"/>
    <property type="match status" value="1"/>
</dbReference>
<dbReference type="PROSITE" id="PS00086">
    <property type="entry name" value="CYTOCHROME_P450"/>
    <property type="match status" value="1"/>
</dbReference>
<organism>
    <name type="scientific">Cochliobolus heterostrophus (strain C5 / ATCC 48332 / race O)</name>
    <name type="common">Southern corn leaf blight fungus</name>
    <name type="synonym">Bipolaris maydis</name>
    <dbReference type="NCBI Taxonomy" id="701091"/>
    <lineage>
        <taxon>Eukaryota</taxon>
        <taxon>Fungi</taxon>
        <taxon>Dikarya</taxon>
        <taxon>Ascomycota</taxon>
        <taxon>Pezizomycotina</taxon>
        <taxon>Dothideomycetes</taxon>
        <taxon>Pleosporomycetidae</taxon>
        <taxon>Pleosporales</taxon>
        <taxon>Pleosporineae</taxon>
        <taxon>Pleosporaceae</taxon>
        <taxon>Bipolaris</taxon>
    </lineage>
</organism>
<accession>M2V933</accession>
<proteinExistence type="evidence at protein level"/>
<gene>
    <name evidence="5" type="primary">oblB</name>
    <name type="ORF">COCHEDRAFT_1201083</name>
</gene>